<feature type="chain" id="PRO_0000335288" description="5'-nucleotidase SurE">
    <location>
        <begin position="1"/>
        <end position="269"/>
    </location>
</feature>
<feature type="binding site" evidence="1">
    <location>
        <position position="11"/>
    </location>
    <ligand>
        <name>a divalent metal cation</name>
        <dbReference type="ChEBI" id="CHEBI:60240"/>
    </ligand>
</feature>
<feature type="binding site" evidence="1">
    <location>
        <position position="12"/>
    </location>
    <ligand>
        <name>a divalent metal cation</name>
        <dbReference type="ChEBI" id="CHEBI:60240"/>
    </ligand>
</feature>
<feature type="binding site" evidence="1">
    <location>
        <position position="43"/>
    </location>
    <ligand>
        <name>a divalent metal cation</name>
        <dbReference type="ChEBI" id="CHEBI:60240"/>
    </ligand>
</feature>
<feature type="binding site" evidence="1">
    <location>
        <position position="101"/>
    </location>
    <ligand>
        <name>a divalent metal cation</name>
        <dbReference type="ChEBI" id="CHEBI:60240"/>
    </ligand>
</feature>
<comment type="function">
    <text evidence="1">Nucleotidase that shows phosphatase activity on nucleoside 5'-monophosphates.</text>
</comment>
<comment type="catalytic activity">
    <reaction evidence="1">
        <text>a ribonucleoside 5'-phosphate + H2O = a ribonucleoside + phosphate</text>
        <dbReference type="Rhea" id="RHEA:12484"/>
        <dbReference type="ChEBI" id="CHEBI:15377"/>
        <dbReference type="ChEBI" id="CHEBI:18254"/>
        <dbReference type="ChEBI" id="CHEBI:43474"/>
        <dbReference type="ChEBI" id="CHEBI:58043"/>
        <dbReference type="EC" id="3.1.3.5"/>
    </reaction>
</comment>
<comment type="cofactor">
    <cofactor evidence="1">
        <name>a divalent metal cation</name>
        <dbReference type="ChEBI" id="CHEBI:60240"/>
    </cofactor>
    <text evidence="1">Binds 1 divalent metal cation per subunit.</text>
</comment>
<comment type="subcellular location">
    <subcellularLocation>
        <location evidence="1">Cytoplasm</location>
    </subcellularLocation>
</comment>
<comment type="similarity">
    <text evidence="1">Belongs to the SurE nucleotidase family.</text>
</comment>
<reference key="1">
    <citation type="submission" date="2006-05" db="EMBL/GenBank/DDBJ databases">
        <authorList>
            <consortium name="Genoscope"/>
        </authorList>
    </citation>
    <scope>NUCLEOTIDE SEQUENCE [LARGE SCALE GENOMIC DNA]</scope>
    <source>
        <strain>WH7803</strain>
    </source>
</reference>
<name>SURE_SYNPW</name>
<gene>
    <name evidence="1" type="primary">surE</name>
    <name type="ordered locus">SynWH7803_1713</name>
</gene>
<accession>A5GMH4</accession>
<protein>
    <recommendedName>
        <fullName evidence="1">5'-nucleotidase SurE</fullName>
        <ecNumber evidence="1">3.1.3.5</ecNumber>
    </recommendedName>
    <alternativeName>
        <fullName evidence="1">Nucleoside 5'-monophosphate phosphohydrolase</fullName>
    </alternativeName>
</protein>
<sequence>MAPLRILISNDDGVFADGIRALAGAAAAAGHQVTVVCPDRERSATGHGLTLQTPIRAEKADSLFDAGISAWACSGTPADCMKLALFELMDEAPDLVLSGINHGPNLGTDVFCSGTVAAAMEGTLEGLPSMAISSACFQWRDFQGAAALAVEVATAALRDQWPENLLLNLNIPPCRPEVMGPLRWTRLSIRRYDEQFSPRKDPRGRTYYWLAGEVVEDLESGGDGPRDWPTDVAQIEANSPSLTPIQPELFWRGPLGGLPRLELNGQRVR</sequence>
<dbReference type="EC" id="3.1.3.5" evidence="1"/>
<dbReference type="EMBL" id="CT971583">
    <property type="protein sequence ID" value="CAK24139.1"/>
    <property type="molecule type" value="Genomic_DNA"/>
</dbReference>
<dbReference type="SMR" id="A5GMH4"/>
<dbReference type="STRING" id="32051.SynWH7803_1713"/>
<dbReference type="KEGG" id="syx:SynWH7803_1713"/>
<dbReference type="eggNOG" id="COG0496">
    <property type="taxonomic scope" value="Bacteria"/>
</dbReference>
<dbReference type="HOGENOM" id="CLU_045192_1_3_3"/>
<dbReference type="OrthoDB" id="9780815at2"/>
<dbReference type="Proteomes" id="UP000001566">
    <property type="component" value="Chromosome"/>
</dbReference>
<dbReference type="GO" id="GO:0005737">
    <property type="term" value="C:cytoplasm"/>
    <property type="evidence" value="ECO:0007669"/>
    <property type="project" value="UniProtKB-SubCell"/>
</dbReference>
<dbReference type="GO" id="GO:0008254">
    <property type="term" value="F:3'-nucleotidase activity"/>
    <property type="evidence" value="ECO:0007669"/>
    <property type="project" value="TreeGrafter"/>
</dbReference>
<dbReference type="GO" id="GO:0008253">
    <property type="term" value="F:5'-nucleotidase activity"/>
    <property type="evidence" value="ECO:0007669"/>
    <property type="project" value="UniProtKB-UniRule"/>
</dbReference>
<dbReference type="GO" id="GO:0004309">
    <property type="term" value="F:exopolyphosphatase activity"/>
    <property type="evidence" value="ECO:0007669"/>
    <property type="project" value="TreeGrafter"/>
</dbReference>
<dbReference type="GO" id="GO:0046872">
    <property type="term" value="F:metal ion binding"/>
    <property type="evidence" value="ECO:0007669"/>
    <property type="project" value="UniProtKB-UniRule"/>
</dbReference>
<dbReference type="GO" id="GO:0000166">
    <property type="term" value="F:nucleotide binding"/>
    <property type="evidence" value="ECO:0007669"/>
    <property type="project" value="UniProtKB-KW"/>
</dbReference>
<dbReference type="Gene3D" id="3.40.1210.10">
    <property type="entry name" value="Survival protein SurE-like phosphatase/nucleotidase"/>
    <property type="match status" value="1"/>
</dbReference>
<dbReference type="HAMAP" id="MF_00060">
    <property type="entry name" value="SurE"/>
    <property type="match status" value="1"/>
</dbReference>
<dbReference type="InterPro" id="IPR030048">
    <property type="entry name" value="SurE"/>
</dbReference>
<dbReference type="InterPro" id="IPR002828">
    <property type="entry name" value="SurE-like_Pase/nucleotidase"/>
</dbReference>
<dbReference type="InterPro" id="IPR036523">
    <property type="entry name" value="SurE-like_sf"/>
</dbReference>
<dbReference type="NCBIfam" id="NF001490">
    <property type="entry name" value="PRK00346.1-4"/>
    <property type="match status" value="1"/>
</dbReference>
<dbReference type="NCBIfam" id="NF001492">
    <property type="entry name" value="PRK00346.2-2"/>
    <property type="match status" value="1"/>
</dbReference>
<dbReference type="NCBIfam" id="TIGR00087">
    <property type="entry name" value="surE"/>
    <property type="match status" value="1"/>
</dbReference>
<dbReference type="PANTHER" id="PTHR30457">
    <property type="entry name" value="5'-NUCLEOTIDASE SURE"/>
    <property type="match status" value="1"/>
</dbReference>
<dbReference type="PANTHER" id="PTHR30457:SF12">
    <property type="entry name" value="5'_3'-NUCLEOTIDASE SURE"/>
    <property type="match status" value="1"/>
</dbReference>
<dbReference type="Pfam" id="PF01975">
    <property type="entry name" value="SurE"/>
    <property type="match status" value="1"/>
</dbReference>
<dbReference type="SUPFAM" id="SSF64167">
    <property type="entry name" value="SurE-like"/>
    <property type="match status" value="1"/>
</dbReference>
<organism>
    <name type="scientific">Synechococcus sp. (strain WH7803)</name>
    <dbReference type="NCBI Taxonomy" id="32051"/>
    <lineage>
        <taxon>Bacteria</taxon>
        <taxon>Bacillati</taxon>
        <taxon>Cyanobacteriota</taxon>
        <taxon>Cyanophyceae</taxon>
        <taxon>Synechococcales</taxon>
        <taxon>Synechococcaceae</taxon>
        <taxon>Synechococcus</taxon>
    </lineage>
</organism>
<keyword id="KW-0963">Cytoplasm</keyword>
<keyword id="KW-0378">Hydrolase</keyword>
<keyword id="KW-0479">Metal-binding</keyword>
<keyword id="KW-0547">Nucleotide-binding</keyword>
<keyword id="KW-1185">Reference proteome</keyword>
<proteinExistence type="inferred from homology"/>
<evidence type="ECO:0000255" key="1">
    <source>
        <dbReference type="HAMAP-Rule" id="MF_00060"/>
    </source>
</evidence>